<sequence length="549" mass="60627">MQADYVIVGSGSAGSAIAYRLSEDGRYSVIVIEAGGSDFGPFIQMPAALAWPMSMKRYNWGYLSEPEPNLDNRRITAPRGKVIGGSSSINGLVYVRGHAEDFNRWEELGAQGWAYADVLPYFKRMEHSHGGEEGWRGTDGPLHVQRGPVSNPLFHAFIQAGAQAGFELTDDYNGSKQEGFGLMEQTIHNGRRWSAANAYLKPALKRGNVTLVNGFARKVIIENGRAVGVEIERRGRVETVKANREVIVSASSFNSPKLLMLSGIGPAAHLKDMGIEVKADRPGVGANLQDHMEFYFQQVSTKPVSLYSWLPWFWQGVAGAQWLLSKGGLGASNQFEACAFLRSAPGLKQPDIQYHFLPVAISYDGKAAAKSHGFQAHVGYNLSKSRGNVTLRSADPHDDPVIRFNYMSHPEDWEKFRHCVRLTREIFGQKAFDDFRGPEIQPGENIETDEQIDAFLREHLESAYHPCGTCRMGDRNDPMAVVDPECRVIGVEGLRVADSSIFPHVTYGNLNGPSIMTGEKAADHILGKTPLPRSNQEPWVNPRAAVSDR</sequence>
<keyword id="KW-0274">FAD</keyword>
<keyword id="KW-0285">Flavoprotein</keyword>
<keyword id="KW-0520">NAD</keyword>
<keyword id="KW-0560">Oxidoreductase</keyword>
<keyword id="KW-1185">Reference proteome</keyword>
<protein>
    <recommendedName>
        <fullName evidence="1">Oxygen-dependent choline dehydrogenase</fullName>
        <shortName evidence="1">CDH</shortName>
        <shortName evidence="1">CHD</shortName>
        <ecNumber evidence="1">1.1.99.1</ecNumber>
    </recommendedName>
    <alternativeName>
        <fullName evidence="1">Betaine aldehyde dehydrogenase</fullName>
        <shortName evidence="1">BADH</shortName>
        <ecNumber evidence="1">1.2.1.8</ecNumber>
    </alternativeName>
</protein>
<gene>
    <name evidence="1" type="primary">betA</name>
    <name type="ordered locus">Atu0830</name>
    <name type="ORF">AGR_C_1517</name>
</gene>
<comment type="function">
    <text evidence="1">Involved in the biosynthesis of the osmoprotectant glycine betaine. Catalyzes the oxidation of choline to betaine aldehyde and betaine aldehyde to glycine betaine at the same rate.</text>
</comment>
<comment type="catalytic activity">
    <reaction evidence="1">
        <text>choline + A = betaine aldehyde + AH2</text>
        <dbReference type="Rhea" id="RHEA:17433"/>
        <dbReference type="ChEBI" id="CHEBI:13193"/>
        <dbReference type="ChEBI" id="CHEBI:15354"/>
        <dbReference type="ChEBI" id="CHEBI:15710"/>
        <dbReference type="ChEBI" id="CHEBI:17499"/>
        <dbReference type="EC" id="1.1.99.1"/>
    </reaction>
</comment>
<comment type="catalytic activity">
    <reaction evidence="1">
        <text>betaine aldehyde + NAD(+) + H2O = glycine betaine + NADH + 2 H(+)</text>
        <dbReference type="Rhea" id="RHEA:15305"/>
        <dbReference type="ChEBI" id="CHEBI:15377"/>
        <dbReference type="ChEBI" id="CHEBI:15378"/>
        <dbReference type="ChEBI" id="CHEBI:15710"/>
        <dbReference type="ChEBI" id="CHEBI:17750"/>
        <dbReference type="ChEBI" id="CHEBI:57540"/>
        <dbReference type="ChEBI" id="CHEBI:57945"/>
        <dbReference type="EC" id="1.2.1.8"/>
    </reaction>
</comment>
<comment type="cofactor">
    <cofactor evidence="1">
        <name>FAD</name>
        <dbReference type="ChEBI" id="CHEBI:57692"/>
    </cofactor>
</comment>
<comment type="pathway">
    <text evidence="1">Amine and polyamine biosynthesis; betaine biosynthesis via choline pathway; betaine aldehyde from choline (cytochrome c reductase route): step 1/1.</text>
</comment>
<comment type="similarity">
    <text evidence="1">Belongs to the GMC oxidoreductase family.</text>
</comment>
<reference key="1">
    <citation type="journal article" date="2001" name="Science">
        <title>The genome of the natural genetic engineer Agrobacterium tumefaciens C58.</title>
        <authorList>
            <person name="Wood D.W."/>
            <person name="Setubal J.C."/>
            <person name="Kaul R."/>
            <person name="Monks D.E."/>
            <person name="Kitajima J.P."/>
            <person name="Okura V.K."/>
            <person name="Zhou Y."/>
            <person name="Chen L."/>
            <person name="Wood G.E."/>
            <person name="Almeida N.F. Jr."/>
            <person name="Woo L."/>
            <person name="Chen Y."/>
            <person name="Paulsen I.T."/>
            <person name="Eisen J.A."/>
            <person name="Karp P.D."/>
            <person name="Bovee D. Sr."/>
            <person name="Chapman P."/>
            <person name="Clendenning J."/>
            <person name="Deatherage G."/>
            <person name="Gillet W."/>
            <person name="Grant C."/>
            <person name="Kutyavin T."/>
            <person name="Levy R."/>
            <person name="Li M.-J."/>
            <person name="McClelland E."/>
            <person name="Palmieri A."/>
            <person name="Raymond C."/>
            <person name="Rouse G."/>
            <person name="Saenphimmachak C."/>
            <person name="Wu Z."/>
            <person name="Romero P."/>
            <person name="Gordon D."/>
            <person name="Zhang S."/>
            <person name="Yoo H."/>
            <person name="Tao Y."/>
            <person name="Biddle P."/>
            <person name="Jung M."/>
            <person name="Krespan W."/>
            <person name="Perry M."/>
            <person name="Gordon-Kamm B."/>
            <person name="Liao L."/>
            <person name="Kim S."/>
            <person name="Hendrick C."/>
            <person name="Zhao Z.-Y."/>
            <person name="Dolan M."/>
            <person name="Chumley F."/>
            <person name="Tingey S.V."/>
            <person name="Tomb J.-F."/>
            <person name="Gordon M.P."/>
            <person name="Olson M.V."/>
            <person name="Nester E.W."/>
        </authorList>
    </citation>
    <scope>NUCLEOTIDE SEQUENCE [LARGE SCALE GENOMIC DNA]</scope>
    <source>
        <strain>C58 / ATCC 33970</strain>
    </source>
</reference>
<reference key="2">
    <citation type="journal article" date="2001" name="Science">
        <title>Genome sequence of the plant pathogen and biotechnology agent Agrobacterium tumefaciens C58.</title>
        <authorList>
            <person name="Goodner B."/>
            <person name="Hinkle G."/>
            <person name="Gattung S."/>
            <person name="Miller N."/>
            <person name="Blanchard M."/>
            <person name="Qurollo B."/>
            <person name="Goldman B.S."/>
            <person name="Cao Y."/>
            <person name="Askenazi M."/>
            <person name="Halling C."/>
            <person name="Mullin L."/>
            <person name="Houmiel K."/>
            <person name="Gordon J."/>
            <person name="Vaudin M."/>
            <person name="Iartchouk O."/>
            <person name="Epp A."/>
            <person name="Liu F."/>
            <person name="Wollam C."/>
            <person name="Allinger M."/>
            <person name="Doughty D."/>
            <person name="Scott C."/>
            <person name="Lappas C."/>
            <person name="Markelz B."/>
            <person name="Flanagan C."/>
            <person name="Crowell C."/>
            <person name="Gurson J."/>
            <person name="Lomo C."/>
            <person name="Sear C."/>
            <person name="Strub G."/>
            <person name="Cielo C."/>
            <person name="Slater S."/>
        </authorList>
    </citation>
    <scope>NUCLEOTIDE SEQUENCE [LARGE SCALE GENOMIC DNA]</scope>
    <source>
        <strain>C58 / ATCC 33970</strain>
    </source>
</reference>
<accession>Q8UH55</accession>
<dbReference type="EC" id="1.1.99.1" evidence="1"/>
<dbReference type="EC" id="1.2.1.8" evidence="1"/>
<dbReference type="EMBL" id="AE007869">
    <property type="protein sequence ID" value="AAK86636.2"/>
    <property type="molecule type" value="Genomic_DNA"/>
</dbReference>
<dbReference type="PIR" id="AF2678">
    <property type="entry name" value="AF2678"/>
</dbReference>
<dbReference type="PIR" id="C97460">
    <property type="entry name" value="C97460"/>
</dbReference>
<dbReference type="RefSeq" id="NP_353851.2">
    <property type="nucleotide sequence ID" value="NC_003062.2"/>
</dbReference>
<dbReference type="RefSeq" id="WP_010971180.1">
    <property type="nucleotide sequence ID" value="NC_003062.2"/>
</dbReference>
<dbReference type="SMR" id="Q8UH55"/>
<dbReference type="STRING" id="176299.Atu0830"/>
<dbReference type="EnsemblBacteria" id="AAK86636">
    <property type="protein sequence ID" value="AAK86636"/>
    <property type="gene ID" value="Atu0830"/>
</dbReference>
<dbReference type="GeneID" id="1132868"/>
<dbReference type="KEGG" id="atu:Atu0830"/>
<dbReference type="PATRIC" id="fig|176299.10.peg.826"/>
<dbReference type="eggNOG" id="COG2303">
    <property type="taxonomic scope" value="Bacteria"/>
</dbReference>
<dbReference type="HOGENOM" id="CLU_002865_7_1_5"/>
<dbReference type="OrthoDB" id="9785276at2"/>
<dbReference type="PhylomeDB" id="Q8UH55"/>
<dbReference type="BioCyc" id="AGRO:ATU0830-MONOMER"/>
<dbReference type="UniPathway" id="UPA00529">
    <property type="reaction ID" value="UER00385"/>
</dbReference>
<dbReference type="Proteomes" id="UP000000813">
    <property type="component" value="Chromosome circular"/>
</dbReference>
<dbReference type="GO" id="GO:0008802">
    <property type="term" value="F:betaine-aldehyde dehydrogenase (NAD+) activity"/>
    <property type="evidence" value="ECO:0007669"/>
    <property type="project" value="UniProtKB-EC"/>
</dbReference>
<dbReference type="GO" id="GO:0008812">
    <property type="term" value="F:choline dehydrogenase activity"/>
    <property type="evidence" value="ECO:0007669"/>
    <property type="project" value="UniProtKB-UniRule"/>
</dbReference>
<dbReference type="GO" id="GO:0050660">
    <property type="term" value="F:flavin adenine dinucleotide binding"/>
    <property type="evidence" value="ECO:0007669"/>
    <property type="project" value="InterPro"/>
</dbReference>
<dbReference type="GO" id="GO:0019285">
    <property type="term" value="P:glycine betaine biosynthetic process from choline"/>
    <property type="evidence" value="ECO:0007669"/>
    <property type="project" value="UniProtKB-UniRule"/>
</dbReference>
<dbReference type="Gene3D" id="3.50.50.60">
    <property type="entry name" value="FAD/NAD(P)-binding domain"/>
    <property type="match status" value="1"/>
</dbReference>
<dbReference type="Gene3D" id="3.30.560.10">
    <property type="entry name" value="Glucose Oxidase, domain 3"/>
    <property type="match status" value="1"/>
</dbReference>
<dbReference type="HAMAP" id="MF_00750">
    <property type="entry name" value="Choline_dehydrogen"/>
    <property type="match status" value="1"/>
</dbReference>
<dbReference type="InterPro" id="IPR011533">
    <property type="entry name" value="BetA"/>
</dbReference>
<dbReference type="InterPro" id="IPR036188">
    <property type="entry name" value="FAD/NAD-bd_sf"/>
</dbReference>
<dbReference type="InterPro" id="IPR012132">
    <property type="entry name" value="GMC_OxRdtase"/>
</dbReference>
<dbReference type="InterPro" id="IPR000172">
    <property type="entry name" value="GMC_OxRdtase_N"/>
</dbReference>
<dbReference type="InterPro" id="IPR007867">
    <property type="entry name" value="GMC_OxRtase_C"/>
</dbReference>
<dbReference type="NCBIfam" id="TIGR01810">
    <property type="entry name" value="betA"/>
    <property type="match status" value="1"/>
</dbReference>
<dbReference type="NCBIfam" id="NF002550">
    <property type="entry name" value="PRK02106.1"/>
    <property type="match status" value="1"/>
</dbReference>
<dbReference type="PANTHER" id="PTHR11552:SF147">
    <property type="entry name" value="CHOLINE DEHYDROGENASE, MITOCHONDRIAL"/>
    <property type="match status" value="1"/>
</dbReference>
<dbReference type="PANTHER" id="PTHR11552">
    <property type="entry name" value="GLUCOSE-METHANOL-CHOLINE GMC OXIDOREDUCTASE"/>
    <property type="match status" value="1"/>
</dbReference>
<dbReference type="Pfam" id="PF05199">
    <property type="entry name" value="GMC_oxred_C"/>
    <property type="match status" value="1"/>
</dbReference>
<dbReference type="Pfam" id="PF00732">
    <property type="entry name" value="GMC_oxred_N"/>
    <property type="match status" value="1"/>
</dbReference>
<dbReference type="PIRSF" id="PIRSF000137">
    <property type="entry name" value="Alcohol_oxidase"/>
    <property type="match status" value="1"/>
</dbReference>
<dbReference type="SUPFAM" id="SSF54373">
    <property type="entry name" value="FAD-linked reductases, C-terminal domain"/>
    <property type="match status" value="1"/>
</dbReference>
<dbReference type="SUPFAM" id="SSF51905">
    <property type="entry name" value="FAD/NAD(P)-binding domain"/>
    <property type="match status" value="1"/>
</dbReference>
<dbReference type="PROSITE" id="PS00623">
    <property type="entry name" value="GMC_OXRED_1"/>
    <property type="match status" value="1"/>
</dbReference>
<dbReference type="PROSITE" id="PS00624">
    <property type="entry name" value="GMC_OXRED_2"/>
    <property type="match status" value="1"/>
</dbReference>
<evidence type="ECO:0000255" key="1">
    <source>
        <dbReference type="HAMAP-Rule" id="MF_00750"/>
    </source>
</evidence>
<evidence type="ECO:0000256" key="2">
    <source>
        <dbReference type="SAM" id="MobiDB-lite"/>
    </source>
</evidence>
<organism>
    <name type="scientific">Agrobacterium fabrum (strain C58 / ATCC 33970)</name>
    <name type="common">Agrobacterium tumefaciens (strain C58)</name>
    <dbReference type="NCBI Taxonomy" id="176299"/>
    <lineage>
        <taxon>Bacteria</taxon>
        <taxon>Pseudomonadati</taxon>
        <taxon>Pseudomonadota</taxon>
        <taxon>Alphaproteobacteria</taxon>
        <taxon>Hyphomicrobiales</taxon>
        <taxon>Rhizobiaceae</taxon>
        <taxon>Rhizobium/Agrobacterium group</taxon>
        <taxon>Agrobacterium</taxon>
        <taxon>Agrobacterium tumefaciens complex</taxon>
    </lineage>
</organism>
<proteinExistence type="inferred from homology"/>
<feature type="chain" id="PRO_0000205583" description="Oxygen-dependent choline dehydrogenase">
    <location>
        <begin position="1"/>
        <end position="549"/>
    </location>
</feature>
<feature type="region of interest" description="Disordered" evidence="2">
    <location>
        <begin position="528"/>
        <end position="549"/>
    </location>
</feature>
<feature type="active site" description="Proton acceptor" evidence="1">
    <location>
        <position position="465"/>
    </location>
</feature>
<feature type="binding site" evidence="1">
    <location>
        <begin position="4"/>
        <end position="33"/>
    </location>
    <ligand>
        <name>FAD</name>
        <dbReference type="ChEBI" id="CHEBI:57692"/>
    </ligand>
</feature>
<name>BETA_AGRFC</name>